<name>FPY3_FUSMA</name>
<evidence type="ECO:0000250" key="1">
    <source>
        <dbReference type="UniProtKB" id="P38777"/>
    </source>
</evidence>
<evidence type="ECO:0000269" key="2">
    <source ref="2"/>
</evidence>
<evidence type="ECO:0000303" key="3">
    <source ref="2"/>
</evidence>
<evidence type="ECO:0000305" key="4"/>
<evidence type="ECO:0000305" key="5">
    <source ref="2"/>
</evidence>
<proteinExistence type="evidence at transcript level"/>
<dbReference type="EC" id="3.1.2.-" evidence="5"/>
<dbReference type="EMBL" id="FCQH01000013">
    <property type="protein sequence ID" value="CVL02472.1"/>
    <property type="molecule type" value="Genomic_DNA"/>
</dbReference>
<dbReference type="SMR" id="A0A1L7TZY0"/>
<dbReference type="VEuPathDB" id="FungiDB:FMAN_00006"/>
<dbReference type="Proteomes" id="UP000184255">
    <property type="component" value="Unassembled WGS sequence"/>
</dbReference>
<dbReference type="GO" id="GO:0005737">
    <property type="term" value="C:cytoplasm"/>
    <property type="evidence" value="ECO:0007669"/>
    <property type="project" value="TreeGrafter"/>
</dbReference>
<dbReference type="GO" id="GO:0005634">
    <property type="term" value="C:nucleus"/>
    <property type="evidence" value="ECO:0007669"/>
    <property type="project" value="TreeGrafter"/>
</dbReference>
<dbReference type="GO" id="GO:0016787">
    <property type="term" value="F:hydrolase activity"/>
    <property type="evidence" value="ECO:0007669"/>
    <property type="project" value="UniProtKB-KW"/>
</dbReference>
<dbReference type="GO" id="GO:0019748">
    <property type="term" value="P:secondary metabolic process"/>
    <property type="evidence" value="ECO:0007669"/>
    <property type="project" value="TreeGrafter"/>
</dbReference>
<dbReference type="Gene3D" id="3.40.50.1820">
    <property type="entry name" value="alpha/beta hydrolase"/>
    <property type="match status" value="1"/>
</dbReference>
<dbReference type="InterPro" id="IPR029058">
    <property type="entry name" value="AB_hydrolase_fold"/>
</dbReference>
<dbReference type="InterPro" id="IPR005645">
    <property type="entry name" value="FSH-like_dom"/>
</dbReference>
<dbReference type="InterPro" id="IPR050593">
    <property type="entry name" value="LovG"/>
</dbReference>
<dbReference type="PANTHER" id="PTHR48070">
    <property type="entry name" value="ESTERASE OVCA2"/>
    <property type="match status" value="1"/>
</dbReference>
<dbReference type="PANTHER" id="PTHR48070:SF7">
    <property type="entry name" value="SERINE HYDROLASE FSH DOMAIN-CONTAINING PROTEIN-RELATED"/>
    <property type="match status" value="1"/>
</dbReference>
<dbReference type="Pfam" id="PF03959">
    <property type="entry name" value="FSH1"/>
    <property type="match status" value="1"/>
</dbReference>
<dbReference type="SUPFAM" id="SSF53474">
    <property type="entry name" value="alpha/beta-Hydrolases"/>
    <property type="match status" value="1"/>
</dbReference>
<accession>A0A1L7TZY0</accession>
<comment type="function">
    <text evidence="2 5">Esterase; part of the gene cluster that mediates the biosynthesis of the gamma-pyrones fusapyrone (FPY) and deoxyfusapyrone (dFPY) (Ref.2). FPY is an undecaketide and thus likely synthesized by the polyketide synthase FPY1 from acetyl-CoA functioning as starter unit and the addition of 10 malonyl-CoA extender units by successive Claisen-condensations. Next to this, FPY shares some rare features: C-glycosylated 4-deoxyglucose at C-3, a gem-dimethyl group at C-13, and an alpha-beta to beta-gamma double bond shift at C-20. During FPY biosynthesis mono-C-methyl groups are transferred to the tetra-, penta-, hexa- and heptaketide, while two C-methyl groups are transferred to the nonaketide, suggesting that the CMet domain is programmed to selectively catalyze two successive C-alpha-methylation reactions of the nonaketide, while other alpha-carbons are non- or mono-methylated only. While the origin of the 4'-deoxyglucose moiety remains opaque, its transfer to C-3 is most likely mediated by the C-glycosyltransferase FPY2. Next to this, the hydroxyl group present at C-33 and discriminating between FPY and dFPY, is likely to be installed by the cytochrome P450 monooxygenase FPY7. No putative function can be predicted for the remaining genes FPY3-FPY6 (Probable).</text>
</comment>
<comment type="pathway">
    <text evidence="5">Secondary metabolite biosynthesis.</text>
</comment>
<comment type="induction">
    <text evidence="2">Expression is induced in the presence of 6mM glutamine.</text>
</comment>
<comment type="similarity">
    <text evidence="4">Belongs to the LovG family.</text>
</comment>
<reference key="1">
    <citation type="journal article" date="2016" name="Genome Biol. Evol.">
        <title>Comparative 'omics' of the Fusarium fujikuroi species complex highlights differences in genetic potential and metabolite synthesis.</title>
        <authorList>
            <person name="Niehaus E.-M."/>
            <person name="Muensterkoetter M."/>
            <person name="Proctor R.H."/>
            <person name="Brown D.W."/>
            <person name="Sharon A."/>
            <person name="Idan Y."/>
            <person name="Oren-Young L."/>
            <person name="Sieber C.M."/>
            <person name="Novak O."/>
            <person name="Pencik A."/>
            <person name="Tarkowska D."/>
            <person name="Hromadova K."/>
            <person name="Freeman S."/>
            <person name="Maymon M."/>
            <person name="Elazar M."/>
            <person name="Youssef S.A."/>
            <person name="El-Shabrawy E.S.M."/>
            <person name="Shalaby A.B.A."/>
            <person name="Houterman P."/>
            <person name="Brock N.L."/>
            <person name="Burkhardt I."/>
            <person name="Tsavkelova E.A."/>
            <person name="Dickschat J.S."/>
            <person name="Galuszka P."/>
            <person name="Gueldener U."/>
            <person name="Tudzynski B."/>
        </authorList>
    </citation>
    <scope>NUCLEOTIDE SEQUENCE [LARGE SCALE GENOMIC DNA]</scope>
    <source>
        <strain>MRC7560</strain>
    </source>
</reference>
<reference key="2">
    <citation type="journal article" date="2021" name="Front. Fungal Biol.">
        <title>Biosynthesis of fusapyrone depends on the H3K9 methyltransferase, FmKmt1, in Fusarium mangiferae.</title>
        <authorList>
            <person name="Atanasoff-Kardjalieff A.K."/>
            <person name="Luenne F."/>
            <person name="Kalinina S."/>
            <person name="Strauss J."/>
            <person name="Humpf H.U."/>
            <person name="Studt-Reinhold L."/>
        </authorList>
    </citation>
    <scope>FUNCTION</scope>
    <scope>INDUCTION</scope>
</reference>
<organism>
    <name type="scientific">Fusarium mangiferae</name>
    <name type="common">Mango malformation disease fungus</name>
    <dbReference type="NCBI Taxonomy" id="192010"/>
    <lineage>
        <taxon>Eukaryota</taxon>
        <taxon>Fungi</taxon>
        <taxon>Dikarya</taxon>
        <taxon>Ascomycota</taxon>
        <taxon>Pezizomycotina</taxon>
        <taxon>Sordariomycetes</taxon>
        <taxon>Hypocreomycetidae</taxon>
        <taxon>Hypocreales</taxon>
        <taxon>Nectriaceae</taxon>
        <taxon>Fusarium</taxon>
        <taxon>Fusarium fujikuroi species complex</taxon>
    </lineage>
</organism>
<sequence length="218" mass="23787">MRILCLHGMGTNSKVLEMQTSALRHQLSHSQSHKYEYVDGGEPMPPAPGIEAFIGQDESLAYYHPHSAKSILTAIDDLWEYIAEEGPFDGVLGFSQGASLAAMIIARAHHSDPPPFQFAIFFCAGLPYCEKSLSAGEVKFLRAEATQGPVIHVPTAHIFGKKDPDVSYSKAMTELCHPWGRVLLDHGAGHEIPRVPVETVDDMARAVEKVVTKAVIGQ</sequence>
<protein>
    <recommendedName>
        <fullName evidence="3">Esterase FPY3</fullName>
        <ecNumber evidence="5">3.1.2.-</ecNumber>
    </recommendedName>
    <alternativeName>
        <fullName evidence="3">Fusapyrone biosynthesis cluster protein 3</fullName>
    </alternativeName>
</protein>
<keyword id="KW-0378">Hydrolase</keyword>
<gene>
    <name evidence="3" type="primary">FPY3</name>
    <name type="ORF">FMAN_00006</name>
</gene>
<feature type="chain" id="PRO_0000458177" description="Esterase FPY3">
    <location>
        <begin position="1"/>
        <end position="218"/>
    </location>
</feature>
<feature type="active site" description="Charge relay system" evidence="1">
    <location>
        <position position="95"/>
    </location>
</feature>
<feature type="active site" description="Charge relay system" evidence="1">
    <location>
        <position position="163"/>
    </location>
</feature>
<feature type="active site" description="Charge relay system" evidence="1">
    <location>
        <position position="190"/>
    </location>
</feature>